<dbReference type="EC" id="3.6.5.2" evidence="2"/>
<dbReference type="EMBL" id="AF005238">
    <property type="protein sequence ID" value="AAB62249.1"/>
    <property type="molecule type" value="mRNA"/>
</dbReference>
<dbReference type="SMR" id="O23778"/>
<dbReference type="GO" id="GO:0005794">
    <property type="term" value="C:Golgi apparatus"/>
    <property type="evidence" value="ECO:0007669"/>
    <property type="project" value="UniProtKB-SubCell"/>
</dbReference>
<dbReference type="GO" id="GO:0005525">
    <property type="term" value="F:GTP binding"/>
    <property type="evidence" value="ECO:0007669"/>
    <property type="project" value="UniProtKB-KW"/>
</dbReference>
<dbReference type="GO" id="GO:0003924">
    <property type="term" value="F:GTPase activity"/>
    <property type="evidence" value="ECO:0007669"/>
    <property type="project" value="InterPro"/>
</dbReference>
<dbReference type="GO" id="GO:0015031">
    <property type="term" value="P:protein transport"/>
    <property type="evidence" value="ECO:0007669"/>
    <property type="project" value="UniProtKB-KW"/>
</dbReference>
<dbReference type="GO" id="GO:0016192">
    <property type="term" value="P:vesicle-mediated transport"/>
    <property type="evidence" value="ECO:0007669"/>
    <property type="project" value="UniProtKB-KW"/>
</dbReference>
<dbReference type="CDD" id="cd04150">
    <property type="entry name" value="Arf1_5_like"/>
    <property type="match status" value="1"/>
</dbReference>
<dbReference type="FunFam" id="3.40.50.300:FF:003500">
    <property type="entry name" value="ADP-ribosylation factor 1"/>
    <property type="match status" value="1"/>
</dbReference>
<dbReference type="Gene3D" id="3.40.50.300">
    <property type="entry name" value="P-loop containing nucleotide triphosphate hydrolases"/>
    <property type="match status" value="1"/>
</dbReference>
<dbReference type="InterPro" id="IPR045872">
    <property type="entry name" value="Arf1-5-like"/>
</dbReference>
<dbReference type="InterPro" id="IPR027417">
    <property type="entry name" value="P-loop_NTPase"/>
</dbReference>
<dbReference type="InterPro" id="IPR005225">
    <property type="entry name" value="Small_GTP-bd"/>
</dbReference>
<dbReference type="InterPro" id="IPR024156">
    <property type="entry name" value="Small_GTPase_ARF"/>
</dbReference>
<dbReference type="InterPro" id="IPR006689">
    <property type="entry name" value="Small_GTPase_ARF/SAR"/>
</dbReference>
<dbReference type="NCBIfam" id="TIGR00231">
    <property type="entry name" value="small_GTP"/>
    <property type="match status" value="1"/>
</dbReference>
<dbReference type="PANTHER" id="PTHR11711">
    <property type="entry name" value="ADP RIBOSYLATION FACTOR-RELATED"/>
    <property type="match status" value="1"/>
</dbReference>
<dbReference type="Pfam" id="PF00025">
    <property type="entry name" value="Arf"/>
    <property type="match status" value="1"/>
</dbReference>
<dbReference type="PRINTS" id="PR00328">
    <property type="entry name" value="SAR1GTPBP"/>
</dbReference>
<dbReference type="SMART" id="SM00177">
    <property type="entry name" value="ARF"/>
    <property type="match status" value="1"/>
</dbReference>
<dbReference type="SMART" id="SM00175">
    <property type="entry name" value="RAB"/>
    <property type="match status" value="1"/>
</dbReference>
<dbReference type="SMART" id="SM00178">
    <property type="entry name" value="SAR"/>
    <property type="match status" value="1"/>
</dbReference>
<dbReference type="SUPFAM" id="SSF52540">
    <property type="entry name" value="P-loop containing nucleoside triphosphate hydrolases"/>
    <property type="match status" value="1"/>
</dbReference>
<dbReference type="PROSITE" id="PS51417">
    <property type="entry name" value="ARF"/>
    <property type="match status" value="1"/>
</dbReference>
<protein>
    <recommendedName>
        <fullName>ADP-ribosylation factor 1</fullName>
        <ecNumber evidence="2">3.6.5.2</ecNumber>
    </recommendedName>
</protein>
<sequence>MGLSFTKLFSRLFAKKEMRILMVGLDAAGKTTILYQLKLGEIVTTIPTIGFNVETVEYQYISFTVWDVGGQDKIRPLWRHYFQNTQGLIFVVDSNDRDRVVEARDELHRMLNEDELRDAVLLVFANKQDLPNAMNAAEITDKHGLHSLRQRHWYIQSTCATSGEGLYEGLDWLSNNIANKA</sequence>
<name>ARF1_CATRO</name>
<evidence type="ECO:0000250" key="1"/>
<evidence type="ECO:0000250" key="2">
    <source>
        <dbReference type="UniProtKB" id="P84077"/>
    </source>
</evidence>
<evidence type="ECO:0000255" key="3"/>
<evidence type="ECO:0000305" key="4"/>
<feature type="initiator methionine" description="Removed" evidence="3">
    <location>
        <position position="1"/>
    </location>
</feature>
<feature type="chain" id="PRO_0000207432" description="ADP-ribosylation factor 1">
    <location>
        <begin position="2"/>
        <end position="181"/>
    </location>
</feature>
<feature type="binding site" evidence="1">
    <location>
        <begin position="24"/>
        <end position="31"/>
    </location>
    <ligand>
        <name>GTP</name>
        <dbReference type="ChEBI" id="CHEBI:37565"/>
    </ligand>
</feature>
<feature type="binding site" evidence="1">
    <location>
        <begin position="67"/>
        <end position="71"/>
    </location>
    <ligand>
        <name>GTP</name>
        <dbReference type="ChEBI" id="CHEBI:37565"/>
    </ligand>
</feature>
<feature type="binding site" evidence="1">
    <location>
        <begin position="126"/>
        <end position="129"/>
    </location>
    <ligand>
        <name>GTP</name>
        <dbReference type="ChEBI" id="CHEBI:37565"/>
    </ligand>
</feature>
<feature type="lipid moiety-binding region" description="N-myristoyl glycine" evidence="3">
    <location>
        <position position="2"/>
    </location>
</feature>
<gene>
    <name type="primary">ARF1</name>
</gene>
<proteinExistence type="evidence at transcript level"/>
<accession>O23778</accession>
<organism>
    <name type="scientific">Catharanthus roseus</name>
    <name type="common">Madagascar periwinkle</name>
    <name type="synonym">Vinca rosea</name>
    <dbReference type="NCBI Taxonomy" id="4058"/>
    <lineage>
        <taxon>Eukaryota</taxon>
        <taxon>Viridiplantae</taxon>
        <taxon>Streptophyta</taxon>
        <taxon>Embryophyta</taxon>
        <taxon>Tracheophyta</taxon>
        <taxon>Spermatophyta</taxon>
        <taxon>Magnoliopsida</taxon>
        <taxon>eudicotyledons</taxon>
        <taxon>Gunneridae</taxon>
        <taxon>Pentapetalae</taxon>
        <taxon>asterids</taxon>
        <taxon>lamiids</taxon>
        <taxon>Gentianales</taxon>
        <taxon>Apocynaceae</taxon>
        <taxon>Rauvolfioideae</taxon>
        <taxon>Vinceae</taxon>
        <taxon>Catharanthinae</taxon>
        <taxon>Catharanthus</taxon>
    </lineage>
</organism>
<reference key="1">
    <citation type="submission" date="1997-05" db="EMBL/GenBank/DDBJ databases">
        <authorList>
            <person name="Uhrig J.F."/>
            <person name="Schwenn J.D."/>
        </authorList>
    </citation>
    <scope>NUCLEOTIDE SEQUENCE [MRNA]</scope>
</reference>
<keyword id="KW-0931">ER-Golgi transport</keyword>
<keyword id="KW-0333">Golgi apparatus</keyword>
<keyword id="KW-0342">GTP-binding</keyword>
<keyword id="KW-0378">Hydrolase</keyword>
<keyword id="KW-0449">Lipoprotein</keyword>
<keyword id="KW-0519">Myristate</keyword>
<keyword id="KW-0547">Nucleotide-binding</keyword>
<keyword id="KW-0653">Protein transport</keyword>
<keyword id="KW-0813">Transport</keyword>
<comment type="function">
    <text evidence="1">GTP-binding protein involved in protein trafficking; may modulate vesicle budding and uncoating within the Golgi apparatus.</text>
</comment>
<comment type="catalytic activity">
    <reaction evidence="2">
        <text>GTP + H2O = GDP + phosphate + H(+)</text>
        <dbReference type="Rhea" id="RHEA:19669"/>
        <dbReference type="ChEBI" id="CHEBI:15377"/>
        <dbReference type="ChEBI" id="CHEBI:15378"/>
        <dbReference type="ChEBI" id="CHEBI:37565"/>
        <dbReference type="ChEBI" id="CHEBI:43474"/>
        <dbReference type="ChEBI" id="CHEBI:58189"/>
        <dbReference type="EC" id="3.6.5.2"/>
    </reaction>
</comment>
<comment type="subcellular location">
    <subcellularLocation>
        <location evidence="1">Golgi apparatus</location>
    </subcellularLocation>
</comment>
<comment type="similarity">
    <text evidence="4">Belongs to the small GTPase superfamily. Arf family.</text>
</comment>